<evidence type="ECO:0000250" key="1"/>
<evidence type="ECO:0000250" key="2">
    <source>
        <dbReference type="UniProtKB" id="A0A0H3AMJ9"/>
    </source>
</evidence>
<evidence type="ECO:0000250" key="3">
    <source>
        <dbReference type="UniProtKB" id="P0AE67"/>
    </source>
</evidence>
<evidence type="ECO:0000255" key="4">
    <source>
        <dbReference type="PROSITE-ProRule" id="PRU00169"/>
    </source>
</evidence>
<evidence type="ECO:0000305" key="5"/>
<accession>P0AE68</accession>
<accession>P06143</accession>
<organism>
    <name type="scientific">Escherichia coli O157:H7</name>
    <dbReference type="NCBI Taxonomy" id="83334"/>
    <lineage>
        <taxon>Bacteria</taxon>
        <taxon>Pseudomonadati</taxon>
        <taxon>Pseudomonadota</taxon>
        <taxon>Gammaproteobacteria</taxon>
        <taxon>Enterobacterales</taxon>
        <taxon>Enterobacteriaceae</taxon>
        <taxon>Escherichia</taxon>
    </lineage>
</organism>
<gene>
    <name type="primary">cheY</name>
    <name type="ordered locus">Z2936</name>
    <name type="ordered locus">ECs2592</name>
</gene>
<reference key="1">
    <citation type="journal article" date="2001" name="Nature">
        <title>Genome sequence of enterohaemorrhagic Escherichia coli O157:H7.</title>
        <authorList>
            <person name="Perna N.T."/>
            <person name="Plunkett G. III"/>
            <person name="Burland V."/>
            <person name="Mau B."/>
            <person name="Glasner J.D."/>
            <person name="Rose D.J."/>
            <person name="Mayhew G.F."/>
            <person name="Evans P.S."/>
            <person name="Gregor J."/>
            <person name="Kirkpatrick H.A."/>
            <person name="Posfai G."/>
            <person name="Hackett J."/>
            <person name="Klink S."/>
            <person name="Boutin A."/>
            <person name="Shao Y."/>
            <person name="Miller L."/>
            <person name="Grotbeck E.J."/>
            <person name="Davis N.W."/>
            <person name="Lim A."/>
            <person name="Dimalanta E.T."/>
            <person name="Potamousis K."/>
            <person name="Apodaca J."/>
            <person name="Anantharaman T.S."/>
            <person name="Lin J."/>
            <person name="Yen G."/>
            <person name="Schwartz D.C."/>
            <person name="Welch R.A."/>
            <person name="Blattner F.R."/>
        </authorList>
    </citation>
    <scope>NUCLEOTIDE SEQUENCE [LARGE SCALE GENOMIC DNA]</scope>
    <source>
        <strain>O157:H7 / EDL933 / ATCC 700927 / EHEC</strain>
    </source>
</reference>
<reference key="2">
    <citation type="journal article" date="2001" name="DNA Res.">
        <title>Complete genome sequence of enterohemorrhagic Escherichia coli O157:H7 and genomic comparison with a laboratory strain K-12.</title>
        <authorList>
            <person name="Hayashi T."/>
            <person name="Makino K."/>
            <person name="Ohnishi M."/>
            <person name="Kurokawa K."/>
            <person name="Ishii K."/>
            <person name="Yokoyama K."/>
            <person name="Han C.-G."/>
            <person name="Ohtsubo E."/>
            <person name="Nakayama K."/>
            <person name="Murata T."/>
            <person name="Tanaka M."/>
            <person name="Tobe T."/>
            <person name="Iida T."/>
            <person name="Takami H."/>
            <person name="Honda T."/>
            <person name="Sasakawa C."/>
            <person name="Ogasawara N."/>
            <person name="Yasunaga T."/>
            <person name="Kuhara S."/>
            <person name="Shiba T."/>
            <person name="Hattori M."/>
            <person name="Shinagawa H."/>
        </authorList>
    </citation>
    <scope>NUCLEOTIDE SEQUENCE [LARGE SCALE GENOMIC DNA]</scope>
    <source>
        <strain>O157:H7 / Sakai / RIMD 0509952 / EHEC</strain>
    </source>
</reference>
<sequence>MADKELKFLVVDDFSTMRRIVRNLLKELGFNNVEEAEDGVDALNKLQAGGYGFVISDWNMPNMDGLELLKTIRADGAMSALPVLMVTAEAKKENIIAAAQAGASGYVVKPFTAATLEEKLNKIFEKLGM</sequence>
<comment type="function">
    <text evidence="3">Involved in the transmission of sensory signals from the chemoreceptors to the flagellar motors. In its active (phosphorylated or acetylated) form, CheY exhibits enhanced binding to a switch component, FliM, at the flagellar motor which induces a change from counterclockwise to clockwise flagellar rotation (By similarity).</text>
</comment>
<comment type="cofactor">
    <cofactor evidence="3">
        <name>Mg(2+)</name>
        <dbReference type="ChEBI" id="CHEBI:18420"/>
    </cofactor>
    <text evidence="3">Binds 1 Mg(2+) ion per subunit.</text>
</comment>
<comment type="subcellular location">
    <subcellularLocation>
        <location evidence="5">Cytoplasm</location>
    </subcellularLocation>
</comment>
<comment type="PTM">
    <text evidence="3">Phosphorylated by CheA or acetylated by acetyl-CoA synthetase, depending on which acetate metabolism pathway is available.</text>
</comment>
<feature type="initiator methionine" description="Removed" evidence="1">
    <location>
        <position position="1"/>
    </location>
</feature>
<feature type="chain" id="PRO_0000081041" description="Chemotaxis protein CheY">
    <location>
        <begin position="2"/>
        <end position="129"/>
    </location>
</feature>
<feature type="domain" description="Response regulatory" evidence="4">
    <location>
        <begin position="7"/>
        <end position="124"/>
    </location>
</feature>
<feature type="binding site" evidence="2">
    <location>
        <position position="12"/>
    </location>
    <ligand>
        <name>Mg(2+)</name>
        <dbReference type="ChEBI" id="CHEBI:18420"/>
    </ligand>
</feature>
<feature type="binding site" evidence="3">
    <location>
        <position position="13"/>
    </location>
    <ligand>
        <name>Mg(2+)</name>
        <dbReference type="ChEBI" id="CHEBI:18420"/>
    </ligand>
</feature>
<feature type="binding site" evidence="3">
    <location>
        <position position="57"/>
    </location>
    <ligand>
        <name>Mg(2+)</name>
        <dbReference type="ChEBI" id="CHEBI:18420"/>
    </ligand>
</feature>
<feature type="binding site" evidence="3">
    <location>
        <position position="59"/>
    </location>
    <ligand>
        <name>Mg(2+)</name>
        <dbReference type="ChEBI" id="CHEBI:18420"/>
    </ligand>
</feature>
<feature type="modified residue" description="4-aspartylphosphate" evidence="4">
    <location>
        <position position="57"/>
    </location>
</feature>
<feature type="modified residue" description="N6-acetyllysine" evidence="1">
    <location>
        <position position="92"/>
    </location>
</feature>
<feature type="modified residue" description="N6-acetyllysine" evidence="1">
    <location>
        <position position="109"/>
    </location>
</feature>
<proteinExistence type="inferred from homology"/>
<protein>
    <recommendedName>
        <fullName>Chemotaxis protein CheY</fullName>
    </recommendedName>
</protein>
<dbReference type="EMBL" id="AE005174">
    <property type="protein sequence ID" value="AAG56872.1"/>
    <property type="molecule type" value="Genomic_DNA"/>
</dbReference>
<dbReference type="EMBL" id="BA000007">
    <property type="protein sequence ID" value="BAB36015.1"/>
    <property type="molecule type" value="Genomic_DNA"/>
</dbReference>
<dbReference type="PIR" id="D85801">
    <property type="entry name" value="D85801"/>
</dbReference>
<dbReference type="PIR" id="H90952">
    <property type="entry name" value="H90952"/>
</dbReference>
<dbReference type="RefSeq" id="NP_310619.1">
    <property type="nucleotide sequence ID" value="NC_002695.1"/>
</dbReference>
<dbReference type="RefSeq" id="WP_000763867.1">
    <property type="nucleotide sequence ID" value="NZ_VOAI01000010.1"/>
</dbReference>
<dbReference type="BMRB" id="P0AE68"/>
<dbReference type="SMR" id="P0AE68"/>
<dbReference type="MINT" id="P0AE68"/>
<dbReference type="STRING" id="155864.Z2936"/>
<dbReference type="GeneID" id="914203"/>
<dbReference type="GeneID" id="93776187"/>
<dbReference type="KEGG" id="ece:Z2936"/>
<dbReference type="KEGG" id="ecs:ECs_2592"/>
<dbReference type="PATRIC" id="fig|386585.9.peg.2718"/>
<dbReference type="eggNOG" id="COG0745">
    <property type="taxonomic scope" value="Bacteria"/>
</dbReference>
<dbReference type="HOGENOM" id="CLU_000445_69_12_6"/>
<dbReference type="OMA" id="AAGAHEY"/>
<dbReference type="Proteomes" id="UP000000558">
    <property type="component" value="Chromosome"/>
</dbReference>
<dbReference type="Proteomes" id="UP000002519">
    <property type="component" value="Chromosome"/>
</dbReference>
<dbReference type="GO" id="GO:0005737">
    <property type="term" value="C:cytoplasm"/>
    <property type="evidence" value="ECO:0007669"/>
    <property type="project" value="UniProtKB-SubCell"/>
</dbReference>
<dbReference type="GO" id="GO:0046872">
    <property type="term" value="F:metal ion binding"/>
    <property type="evidence" value="ECO:0007669"/>
    <property type="project" value="UniProtKB-KW"/>
</dbReference>
<dbReference type="GO" id="GO:0097588">
    <property type="term" value="P:archaeal or bacterial-type flagellum-dependent cell motility"/>
    <property type="evidence" value="ECO:0007669"/>
    <property type="project" value="UniProtKB-KW"/>
</dbReference>
<dbReference type="GO" id="GO:0006935">
    <property type="term" value="P:chemotaxis"/>
    <property type="evidence" value="ECO:0007669"/>
    <property type="project" value="UniProtKB-KW"/>
</dbReference>
<dbReference type="GO" id="GO:0000160">
    <property type="term" value="P:phosphorelay signal transduction system"/>
    <property type="evidence" value="ECO:0007669"/>
    <property type="project" value="UniProtKB-KW"/>
</dbReference>
<dbReference type="CDD" id="cd19923">
    <property type="entry name" value="REC_CheY_CheY3"/>
    <property type="match status" value="1"/>
</dbReference>
<dbReference type="FunFam" id="3.40.50.2300:FF:000019">
    <property type="entry name" value="Chemotaxis response regulator CheY"/>
    <property type="match status" value="1"/>
</dbReference>
<dbReference type="Gene3D" id="3.40.50.2300">
    <property type="match status" value="1"/>
</dbReference>
<dbReference type="InterPro" id="IPR011006">
    <property type="entry name" value="CheY-like_superfamily"/>
</dbReference>
<dbReference type="InterPro" id="IPR001789">
    <property type="entry name" value="Sig_transdc_resp-reg_receiver"/>
</dbReference>
<dbReference type="InterPro" id="IPR052048">
    <property type="entry name" value="ST_Response_Regulator"/>
</dbReference>
<dbReference type="NCBIfam" id="NF007901">
    <property type="entry name" value="PRK10610.1"/>
    <property type="match status" value="1"/>
</dbReference>
<dbReference type="PANTHER" id="PTHR43228">
    <property type="entry name" value="TWO-COMPONENT RESPONSE REGULATOR"/>
    <property type="match status" value="1"/>
</dbReference>
<dbReference type="PANTHER" id="PTHR43228:SF1">
    <property type="entry name" value="TWO-COMPONENT RESPONSE REGULATOR ARR22"/>
    <property type="match status" value="1"/>
</dbReference>
<dbReference type="Pfam" id="PF00072">
    <property type="entry name" value="Response_reg"/>
    <property type="match status" value="1"/>
</dbReference>
<dbReference type="SMART" id="SM00448">
    <property type="entry name" value="REC"/>
    <property type="match status" value="1"/>
</dbReference>
<dbReference type="SUPFAM" id="SSF52172">
    <property type="entry name" value="CheY-like"/>
    <property type="match status" value="1"/>
</dbReference>
<dbReference type="PROSITE" id="PS50110">
    <property type="entry name" value="RESPONSE_REGULATORY"/>
    <property type="match status" value="1"/>
</dbReference>
<name>CHEY_ECO57</name>
<keyword id="KW-0007">Acetylation</keyword>
<keyword id="KW-0145">Chemotaxis</keyword>
<keyword id="KW-0963">Cytoplasm</keyword>
<keyword id="KW-0283">Flagellar rotation</keyword>
<keyword id="KW-0460">Magnesium</keyword>
<keyword id="KW-0479">Metal-binding</keyword>
<keyword id="KW-0597">Phosphoprotein</keyword>
<keyword id="KW-1185">Reference proteome</keyword>
<keyword id="KW-0902">Two-component regulatory system</keyword>